<organism>
    <name type="scientific">Hordeum vulgare</name>
    <name type="common">Barley</name>
    <dbReference type="NCBI Taxonomy" id="4513"/>
    <lineage>
        <taxon>Eukaryota</taxon>
        <taxon>Viridiplantae</taxon>
        <taxon>Streptophyta</taxon>
        <taxon>Embryophyta</taxon>
        <taxon>Tracheophyta</taxon>
        <taxon>Spermatophyta</taxon>
        <taxon>Magnoliopsida</taxon>
        <taxon>Liliopsida</taxon>
        <taxon>Poales</taxon>
        <taxon>Poaceae</taxon>
        <taxon>BOP clade</taxon>
        <taxon>Pooideae</taxon>
        <taxon>Triticodae</taxon>
        <taxon>Triticeae</taxon>
        <taxon>Hordeinae</taxon>
        <taxon>Hordeum</taxon>
    </lineage>
</organism>
<comment type="function">
    <text evidence="1">Functions as a voltage-gated inward-rectifying Ca(2+) channel (VDCC) across the plasma membrane that mediates sucrose-induced Ca(2+) influx in autotrophically grown leaf cells. Acts as the major ROS-responsive Ca(2+) channel and is the possible target of Al-dependent inhibition. Plays a regulatory role in defense responses (By similarity).</text>
</comment>
<comment type="activity regulation">
    <text evidence="1">Inhibited by Al(3+).</text>
</comment>
<comment type="subunit">
    <text evidence="1">Homodimer.</text>
</comment>
<comment type="subcellular location">
    <subcellularLocation>
        <location evidence="1">Membrane</location>
        <topology evidence="1">Multi-pass membrane protein</topology>
    </subcellularLocation>
</comment>
<comment type="domain">
    <text evidence="1">Each of the two internal repeats contains five hydrophobic transmembrane segments (S1, S2, S3, S5, S6) and one positively charged transmembrane segment (S4). S4 segments probably represent the voltage-sensor and are characterized by a series of positively charged amino acids (By similarity).</text>
</comment>
<comment type="similarity">
    <text evidence="5">Belongs to the calcium channel alpha-1 subunit (TC 1.A.1.11) family. Two pore calcium channel subfamily.</text>
</comment>
<gene>
    <name type="primary">TPC1</name>
</gene>
<feature type="chain" id="PRO_0000343170" description="Two pore calcium channel protein 1">
    <location>
        <begin position="1"/>
        <end position="742"/>
    </location>
</feature>
<feature type="topological domain" description="Cytoplasmic" evidence="2">
    <location>
        <begin position="1"/>
        <end position="82"/>
    </location>
</feature>
<feature type="transmembrane region" description="Helical; Name=S1 of repeat I" evidence="2">
    <location>
        <begin position="83"/>
        <end position="103"/>
    </location>
</feature>
<feature type="topological domain" description="Extracellular" evidence="2">
    <location>
        <begin position="104"/>
        <end position="140"/>
    </location>
</feature>
<feature type="transmembrane region" description="Helical; Name=S2 of repeat I" evidence="2">
    <location>
        <begin position="141"/>
        <end position="161"/>
    </location>
</feature>
<feature type="topological domain" description="Cytoplasmic" evidence="2">
    <location>
        <begin position="162"/>
        <end position="176"/>
    </location>
</feature>
<feature type="transmembrane region" description="Helical; Name=S3 of repeat I" evidence="2">
    <location>
        <begin position="177"/>
        <end position="197"/>
    </location>
</feature>
<feature type="topological domain" description="Extracellular" evidence="2">
    <location>
        <begin position="198"/>
        <end position="204"/>
    </location>
</feature>
<feature type="transmembrane region" description="Helical; Voltage-sensor; Name=S4 of repeat I" evidence="2">
    <location>
        <begin position="205"/>
        <end position="226"/>
    </location>
</feature>
<feature type="transmembrane region" description="Helical; Name=S5 of repeat I" evidence="2">
    <location>
        <begin position="227"/>
        <end position="247"/>
    </location>
</feature>
<feature type="topological domain" description="Extracellular" evidence="2">
    <location>
        <begin position="248"/>
        <end position="258"/>
    </location>
</feature>
<feature type="intramembrane region" description="Pore-forming; Name=Pore-forming 1" evidence="1">
    <location>
        <begin position="259"/>
        <end position="273"/>
    </location>
</feature>
<feature type="topological domain" description="Extracellular" evidence="2">
    <location>
        <begin position="274"/>
        <end position="296"/>
    </location>
</feature>
<feature type="transmembrane region" description="Helical; Name=S6 of repeat I" evidence="2">
    <location>
        <begin position="297"/>
        <end position="317"/>
    </location>
</feature>
<feature type="topological domain" description="Cytoplasmic" evidence="2">
    <location>
        <begin position="318"/>
        <end position="446"/>
    </location>
</feature>
<feature type="transmembrane region" description="Helical; Name=S1 of repeat II" evidence="2">
    <location>
        <begin position="447"/>
        <end position="467"/>
    </location>
</feature>
<feature type="topological domain" description="Extracellular" evidence="2">
    <location>
        <begin position="468"/>
        <end position="480"/>
    </location>
</feature>
<feature type="transmembrane region" description="Helical; Name=S2 of repeat II" evidence="2">
    <location>
        <begin position="481"/>
        <end position="501"/>
    </location>
</feature>
<feature type="topological domain" description="Cytoplasmic" evidence="2">
    <location>
        <begin position="502"/>
        <end position="510"/>
    </location>
</feature>
<feature type="transmembrane region" description="Helical; Name=S3 of repeat II" evidence="2">
    <location>
        <begin position="511"/>
        <end position="531"/>
    </location>
</feature>
<feature type="topological domain" description="Extracellular" evidence="2">
    <location>
        <begin position="532"/>
        <end position="540"/>
    </location>
</feature>
<feature type="transmembrane region" description="Helical; Voltage-sensor; Name=S4 of repeat II" evidence="2">
    <location>
        <begin position="541"/>
        <end position="558"/>
    </location>
</feature>
<feature type="topological domain" description="Cytoplasmic" evidence="2">
    <location>
        <begin position="559"/>
        <end position="582"/>
    </location>
</feature>
<feature type="transmembrane region" description="Helical; Name=S5 of repeat II" evidence="2">
    <location>
        <begin position="583"/>
        <end position="603"/>
    </location>
</feature>
<feature type="topological domain" description="Extracellular" evidence="2">
    <location>
        <begin position="604"/>
        <end position="627"/>
    </location>
</feature>
<feature type="intramembrane region" description="Pore-forming; Name=Pore-forming 2" evidence="1">
    <location>
        <begin position="628"/>
        <end position="642"/>
    </location>
</feature>
<feature type="topological domain" description="Extracellular" evidence="2">
    <location>
        <begin position="643"/>
        <end position="663"/>
    </location>
</feature>
<feature type="transmembrane region" description="Helical; Name=S6 of repeat II" evidence="2">
    <location>
        <begin position="664"/>
        <end position="684"/>
    </location>
</feature>
<feature type="topological domain" description="Cytoplasmic" evidence="2">
    <location>
        <begin position="685"/>
        <end position="742"/>
    </location>
</feature>
<feature type="domain" description="EF-hand 1" evidence="3">
    <location>
        <begin position="335"/>
        <end position="370"/>
    </location>
</feature>
<feature type="domain" description="EF-hand 2" evidence="3">
    <location>
        <begin position="376"/>
        <end position="411"/>
    </location>
</feature>
<feature type="region of interest" description="Disordered" evidence="4">
    <location>
        <begin position="1"/>
        <end position="44"/>
    </location>
</feature>
<feature type="glycosylation site" description="N-linked (GlcNAc...) asparagine" evidence="2">
    <location>
        <position position="469"/>
    </location>
</feature>
<name>TPC1_HORVU</name>
<dbReference type="EMBL" id="AY465119">
    <property type="protein sequence ID" value="AAR27998.1"/>
    <property type="molecule type" value="mRNA"/>
</dbReference>
<dbReference type="SMR" id="Q6S5H8"/>
<dbReference type="GlyCosmos" id="Q6S5H8">
    <property type="glycosylation" value="1 site, No reported glycans"/>
</dbReference>
<dbReference type="GO" id="GO:0034702">
    <property type="term" value="C:monoatomic ion channel complex"/>
    <property type="evidence" value="ECO:0007669"/>
    <property type="project" value="UniProtKB-KW"/>
</dbReference>
<dbReference type="GO" id="GO:0000325">
    <property type="term" value="C:plant-type vacuole"/>
    <property type="evidence" value="ECO:0007669"/>
    <property type="project" value="TreeGrafter"/>
</dbReference>
<dbReference type="GO" id="GO:0005774">
    <property type="term" value="C:vacuolar membrane"/>
    <property type="evidence" value="ECO:0007669"/>
    <property type="project" value="TreeGrafter"/>
</dbReference>
<dbReference type="GO" id="GO:0005509">
    <property type="term" value="F:calcium ion binding"/>
    <property type="evidence" value="ECO:0007669"/>
    <property type="project" value="InterPro"/>
</dbReference>
<dbReference type="GO" id="GO:0005245">
    <property type="term" value="F:voltage-gated calcium channel activity"/>
    <property type="evidence" value="ECO:0007669"/>
    <property type="project" value="InterPro"/>
</dbReference>
<dbReference type="GO" id="GO:0006952">
    <property type="term" value="P:defense response"/>
    <property type="evidence" value="ECO:0007669"/>
    <property type="project" value="UniProtKB-KW"/>
</dbReference>
<dbReference type="CDD" id="cd00051">
    <property type="entry name" value="EFh"/>
    <property type="match status" value="1"/>
</dbReference>
<dbReference type="FunFam" id="1.10.238.10:FF:000253">
    <property type="entry name" value="Two pore calcium channel protein 1"/>
    <property type="match status" value="1"/>
</dbReference>
<dbReference type="FunFam" id="1.10.287.70:FF:000094">
    <property type="entry name" value="Two pore calcium channel protein 1"/>
    <property type="match status" value="1"/>
</dbReference>
<dbReference type="FunFam" id="1.10.287.70:FF:000129">
    <property type="entry name" value="Two pore calcium channel protein 1"/>
    <property type="match status" value="1"/>
</dbReference>
<dbReference type="FunFam" id="1.20.120.350:FF:000055">
    <property type="entry name" value="Two pore calcium channel protein 1"/>
    <property type="match status" value="1"/>
</dbReference>
<dbReference type="Gene3D" id="1.10.287.70">
    <property type="match status" value="2"/>
</dbReference>
<dbReference type="Gene3D" id="1.10.238.10">
    <property type="entry name" value="EF-hand"/>
    <property type="match status" value="1"/>
</dbReference>
<dbReference type="Gene3D" id="1.20.120.350">
    <property type="entry name" value="Voltage-gated potassium channels. Chain C"/>
    <property type="match status" value="1"/>
</dbReference>
<dbReference type="InterPro" id="IPR011992">
    <property type="entry name" value="EF-hand-dom_pair"/>
</dbReference>
<dbReference type="InterPro" id="IPR002048">
    <property type="entry name" value="EF_hand_dom"/>
</dbReference>
<dbReference type="InterPro" id="IPR005821">
    <property type="entry name" value="Ion_trans_dom"/>
</dbReference>
<dbReference type="InterPro" id="IPR044581">
    <property type="entry name" value="TPC1_plant"/>
</dbReference>
<dbReference type="InterPro" id="IPR027359">
    <property type="entry name" value="Volt_channel_dom_sf"/>
</dbReference>
<dbReference type="PANTHER" id="PTHR46988">
    <property type="entry name" value="TWO PORE CALCIUM CHANNEL PROTEIN 1"/>
    <property type="match status" value="1"/>
</dbReference>
<dbReference type="PANTHER" id="PTHR46988:SF2">
    <property type="entry name" value="TWO PORE CALCIUM CHANNEL PROTEIN 1"/>
    <property type="match status" value="1"/>
</dbReference>
<dbReference type="Pfam" id="PF13499">
    <property type="entry name" value="EF-hand_7"/>
    <property type="match status" value="1"/>
</dbReference>
<dbReference type="Pfam" id="PF00520">
    <property type="entry name" value="Ion_trans"/>
    <property type="match status" value="2"/>
</dbReference>
<dbReference type="SMART" id="SM00054">
    <property type="entry name" value="EFh"/>
    <property type="match status" value="2"/>
</dbReference>
<dbReference type="SUPFAM" id="SSF47473">
    <property type="entry name" value="EF-hand"/>
    <property type="match status" value="1"/>
</dbReference>
<dbReference type="SUPFAM" id="SSF81324">
    <property type="entry name" value="Voltage-gated potassium channels"/>
    <property type="match status" value="1"/>
</dbReference>
<dbReference type="PROSITE" id="PS50222">
    <property type="entry name" value="EF_HAND_2"/>
    <property type="match status" value="2"/>
</dbReference>
<reference key="1">
    <citation type="submission" date="2003-11" db="EMBL/GenBank/DDBJ databases">
        <authorList>
            <person name="Zhang Z."/>
            <person name="Qiu J.-L."/>
            <person name="Lindhart U."/>
            <person name="Thordal-Christensen H."/>
        </authorList>
    </citation>
    <scope>NUCLEOTIDE SEQUENCE [MRNA]</scope>
</reference>
<proteinExistence type="evidence at transcript level"/>
<keyword id="KW-0106">Calcium</keyword>
<keyword id="KW-0107">Calcium channel</keyword>
<keyword id="KW-0109">Calcium transport</keyword>
<keyword id="KW-0325">Glycoprotein</keyword>
<keyword id="KW-0407">Ion channel</keyword>
<keyword id="KW-0406">Ion transport</keyword>
<keyword id="KW-0472">Membrane</keyword>
<keyword id="KW-0611">Plant defense</keyword>
<keyword id="KW-0677">Repeat</keyword>
<keyword id="KW-0812">Transmembrane</keyword>
<keyword id="KW-1133">Transmembrane helix</keyword>
<keyword id="KW-0813">Transport</keyword>
<keyword id="KW-0851">Voltage-gated channel</keyword>
<protein>
    <recommendedName>
        <fullName>Two pore calcium channel protein 1</fullName>
    </recommendedName>
    <alternativeName>
        <fullName>Voltage-dependent calcium channel protein TPC1</fullName>
        <shortName>HvTPC1</shortName>
    </alternativeName>
</protein>
<accession>Q6S5H8</accession>
<sequence>MSEAQAPLITEEAAERGLASSGSRRLSDGGGGQGSRKYRRRSDALAHGDRYQKAAALVDLAEDGVGIPEDVLNDTRFGRAMSFYFVYLRLDWLWSLNIFALILLNFLEKPLWCRKDALHACDQRDMYFLGQLPYFSKTESLIYEGLTLVILVMEILCPLSYEGLNIFWRSTTNKLKILLLFILACDILVFAFSSQPFRLAPYIRVVFLIMTIRELRMCAITLAGLIGTYLNVLALSLLFLLFASWLAYVTFEDTPQGKTIFSSYGVTLYQMFVLFTTSNNPDVWVPAYKISRWYSLFFIVYVLLGVYFLTNLILAVIYDSFKEQFAKQLVQVDAIRKNILQKAFELIDTNTRGYLDREQCISLLNELNKYRSLPKTSREDFELIFAELDRSGDFKVTSEEFADLCNTIAIKFQKEPPPSYLEKFPFYHSPVCGRLKSFVRSRTFEYIIVFVLLINLVAVIIETTLDIENSSSQETWQEVEFFLGWIYVAEMALKIFSLGFGAYWMEGQNKFDFVLTWTIFIGETLTFAFPSKLPFLSNGEWIRYLLLGRVLRLTRILLQVQRFRVFVATFFTLMSSLMPYLGIVFCILCMYCSLGLQIFGGIVYAGNPTLEETDLFSNDYLLFNFNDYPSGMVTLFNLLVMGNWQVWMESYWQLTGSSWSLIYFVSFYLISILLLLNLIVAFVLEAFFAEMELEKGEEVDIQSPTSGGIKKRRSMRVRSKGTMVDILLHHMLSNELDGSQNS</sequence>
<evidence type="ECO:0000250" key="1"/>
<evidence type="ECO:0000255" key="2"/>
<evidence type="ECO:0000255" key="3">
    <source>
        <dbReference type="PROSITE-ProRule" id="PRU00448"/>
    </source>
</evidence>
<evidence type="ECO:0000256" key="4">
    <source>
        <dbReference type="SAM" id="MobiDB-lite"/>
    </source>
</evidence>
<evidence type="ECO:0000305" key="5"/>